<geneLocation type="chloroplast"/>
<name>PSBH_PEA</name>
<proteinExistence type="evidence at protein level"/>
<accession>Q9XQR3</accession>
<reference key="1">
    <citation type="journal article" date="1989" name="Physiol. Plantarum">
        <title>Nucleotide sequence of the 5.6 kbp psbB operon of pea chloroplast DNA.</title>
        <authorList>
            <person name="Lehmbeck J."/>
            <person name="Stummann B.M."/>
            <person name="Henningsen K.W."/>
        </authorList>
    </citation>
    <scope>NUCLEOTIDE SEQUENCE [GENOMIC DNA]</scope>
</reference>
<reference key="2">
    <citation type="journal article" date="1977" name="Nature">
        <title>Phosphorylation of chloroplast membrane polypeptides.</title>
        <authorList>
            <person name="Bennett J."/>
        </authorList>
    </citation>
    <scope>PHOSPHORYLATION</scope>
    <scope>SUBCELLULAR LOCATION</scope>
    <source>
        <strain>cv. Feltham First</strain>
    </source>
</reference>
<organism>
    <name type="scientific">Pisum sativum</name>
    <name type="common">Garden pea</name>
    <name type="synonym">Lathyrus oleraceus</name>
    <dbReference type="NCBI Taxonomy" id="3888"/>
    <lineage>
        <taxon>Eukaryota</taxon>
        <taxon>Viridiplantae</taxon>
        <taxon>Streptophyta</taxon>
        <taxon>Embryophyta</taxon>
        <taxon>Tracheophyta</taxon>
        <taxon>Spermatophyta</taxon>
        <taxon>Magnoliopsida</taxon>
        <taxon>eudicotyledons</taxon>
        <taxon>Gunneridae</taxon>
        <taxon>Pentapetalae</taxon>
        <taxon>rosids</taxon>
        <taxon>fabids</taxon>
        <taxon>Fabales</taxon>
        <taxon>Fabaceae</taxon>
        <taxon>Papilionoideae</taxon>
        <taxon>50 kb inversion clade</taxon>
        <taxon>NPAAA clade</taxon>
        <taxon>Hologalegina</taxon>
        <taxon>IRL clade</taxon>
        <taxon>Fabeae</taxon>
        <taxon>Pisum</taxon>
    </lineage>
</organism>
<evidence type="ECO:0000250" key="1">
    <source>
        <dbReference type="UniProtKB" id="P56780"/>
    </source>
</evidence>
<evidence type="ECO:0000255" key="2">
    <source>
        <dbReference type="HAMAP-Rule" id="MF_00752"/>
    </source>
</evidence>
<evidence type="ECO:0000256" key="3">
    <source>
        <dbReference type="SAM" id="MobiDB-lite"/>
    </source>
</evidence>
<evidence type="ECO:0000269" key="4">
    <source ref="2"/>
</evidence>
<evidence type="ECO:0000303" key="5">
    <source ref="2"/>
</evidence>
<evidence type="ECO:0000305" key="6">
    <source ref="2"/>
</evidence>
<evidence type="ECO:0007829" key="7">
    <source>
        <dbReference type="PDB" id="5XNL"/>
    </source>
</evidence>
<gene>
    <name evidence="2" type="primary">psbH</name>
</gene>
<sequence length="73" mass="7858">MATQTVENSSRSGPRRTAVGDLLKPLNSEYGKVAPGWGTTPLMGIAMALFAVFLSIILEIYNSSLLLDQISMN</sequence>
<protein>
    <recommendedName>
        <fullName evidence="2">Photosystem II reaction center protein H</fullName>
        <shortName evidence="2">PSII-H</shortName>
    </recommendedName>
    <alternativeName>
        <fullName evidence="2">Photosystem II 10 kDa phosphoprotein</fullName>
    </alternativeName>
    <alternativeName>
        <fullName evidence="5">Photosystem II 9 kDa phosphoprotein</fullName>
    </alternativeName>
</protein>
<keyword id="KW-0002">3D-structure</keyword>
<keyword id="KW-0150">Chloroplast</keyword>
<keyword id="KW-0472">Membrane</keyword>
<keyword id="KW-0597">Phosphoprotein</keyword>
<keyword id="KW-0602">Photosynthesis</keyword>
<keyword id="KW-0604">Photosystem II</keyword>
<keyword id="KW-0934">Plastid</keyword>
<keyword id="KW-0793">Thylakoid</keyword>
<keyword id="KW-0812">Transmembrane</keyword>
<keyword id="KW-1133">Transmembrane helix</keyword>
<dbReference type="EMBL" id="AF153442">
    <property type="protein sequence ID" value="AAD41887.1"/>
    <property type="molecule type" value="Genomic_DNA"/>
</dbReference>
<dbReference type="PDB" id="5XNL">
    <property type="method" value="EM"/>
    <property type="resolution" value="2.70 A"/>
    <property type="chains" value="H/h=1-73"/>
</dbReference>
<dbReference type="PDB" id="5XNM">
    <property type="method" value="EM"/>
    <property type="resolution" value="3.20 A"/>
    <property type="chains" value="H/h=1-73"/>
</dbReference>
<dbReference type="PDB" id="6YP7">
    <property type="method" value="EM"/>
    <property type="resolution" value="3.80 A"/>
    <property type="chains" value="H/h=13-72"/>
</dbReference>
<dbReference type="PDBsum" id="5XNL"/>
<dbReference type="PDBsum" id="5XNM"/>
<dbReference type="PDBsum" id="6YP7"/>
<dbReference type="EMDB" id="EMD-10865"/>
<dbReference type="EMDB" id="EMD-6741"/>
<dbReference type="EMDB" id="EMD-6742"/>
<dbReference type="SMR" id="Q9XQR3"/>
<dbReference type="GO" id="GO:0009535">
    <property type="term" value="C:chloroplast thylakoid membrane"/>
    <property type="evidence" value="ECO:0007669"/>
    <property type="project" value="UniProtKB-SubCell"/>
</dbReference>
<dbReference type="GO" id="GO:0009523">
    <property type="term" value="C:photosystem II"/>
    <property type="evidence" value="ECO:0007669"/>
    <property type="project" value="UniProtKB-KW"/>
</dbReference>
<dbReference type="GO" id="GO:0042301">
    <property type="term" value="F:phosphate ion binding"/>
    <property type="evidence" value="ECO:0007669"/>
    <property type="project" value="InterPro"/>
</dbReference>
<dbReference type="GO" id="GO:0015979">
    <property type="term" value="P:photosynthesis"/>
    <property type="evidence" value="ECO:0007669"/>
    <property type="project" value="UniProtKB-UniRule"/>
</dbReference>
<dbReference type="GO" id="GO:0050821">
    <property type="term" value="P:protein stabilization"/>
    <property type="evidence" value="ECO:0007669"/>
    <property type="project" value="InterPro"/>
</dbReference>
<dbReference type="FunFam" id="1.20.5.880:FF:000001">
    <property type="entry name" value="Photosystem II reaction center protein H"/>
    <property type="match status" value="1"/>
</dbReference>
<dbReference type="Gene3D" id="1.20.5.880">
    <property type="entry name" value="Photosystem II reaction center protein H"/>
    <property type="match status" value="1"/>
</dbReference>
<dbReference type="HAMAP" id="MF_00752">
    <property type="entry name" value="PSII_PsbH"/>
    <property type="match status" value="1"/>
</dbReference>
<dbReference type="InterPro" id="IPR001056">
    <property type="entry name" value="PSII_PsbH"/>
</dbReference>
<dbReference type="InterPro" id="IPR036863">
    <property type="entry name" value="PSII_PsbH_sf"/>
</dbReference>
<dbReference type="NCBIfam" id="NF002728">
    <property type="entry name" value="PRK02624.1"/>
    <property type="match status" value="1"/>
</dbReference>
<dbReference type="PANTHER" id="PTHR34469">
    <property type="entry name" value="PHOTOSYSTEM II REACTION CENTER PROTEIN H"/>
    <property type="match status" value="1"/>
</dbReference>
<dbReference type="PANTHER" id="PTHR34469:SF4">
    <property type="entry name" value="PHOTOSYSTEM II REACTION CENTER PROTEIN H"/>
    <property type="match status" value="1"/>
</dbReference>
<dbReference type="Pfam" id="PF00737">
    <property type="entry name" value="PsbH"/>
    <property type="match status" value="1"/>
</dbReference>
<dbReference type="SUPFAM" id="SSF161025">
    <property type="entry name" value="Photosystem II 10 kDa phosphoprotein PsbH"/>
    <property type="match status" value="1"/>
</dbReference>
<feature type="initiator methionine" description="Removed" evidence="1">
    <location>
        <position position="1"/>
    </location>
</feature>
<feature type="chain" id="PRO_0000070526" description="Photosystem II reaction center protein H">
    <location>
        <begin position="2"/>
        <end position="73"/>
    </location>
</feature>
<feature type="transmembrane region" description="Helical" evidence="2">
    <location>
        <begin position="41"/>
        <end position="61"/>
    </location>
</feature>
<feature type="region of interest" description="Disordered" evidence="3">
    <location>
        <begin position="1"/>
        <end position="20"/>
    </location>
</feature>
<feature type="compositionally biased region" description="Polar residues" evidence="3">
    <location>
        <begin position="1"/>
        <end position="12"/>
    </location>
</feature>
<feature type="modified residue" description="Phosphothreonine" evidence="2">
    <location>
        <position position="3"/>
    </location>
</feature>
<feature type="modified residue" description="Phosphothreonine" evidence="2">
    <location>
        <position position="5"/>
    </location>
</feature>
<feature type="helix" evidence="7">
    <location>
        <begin position="18"/>
        <end position="23"/>
    </location>
</feature>
<feature type="helix" evidence="7">
    <location>
        <begin position="25"/>
        <end position="27"/>
    </location>
</feature>
<feature type="strand" evidence="7">
    <location>
        <begin position="32"/>
        <end position="35"/>
    </location>
</feature>
<feature type="turn" evidence="7">
    <location>
        <begin position="36"/>
        <end position="39"/>
    </location>
</feature>
<feature type="helix" evidence="7">
    <location>
        <begin position="40"/>
        <end position="61"/>
    </location>
</feature>
<comment type="function">
    <text evidence="2">One of the components of the core complex of photosystem II (PSII), required for its stability and/or assembly. PSII is a light-driven water:plastoquinone oxidoreductase that uses light energy to abstract electrons from H(2)O, generating O(2) and a proton gradient subsequently used for ATP formation. It consists of a core antenna complex that captures photons, and an electron transfer chain that converts photonic excitation into a charge separation.</text>
</comment>
<comment type="subunit">
    <text evidence="2">PSII is composed of 1 copy each of membrane proteins PsbA, PsbB, PsbC, PsbD, PsbE, PsbF, PsbH, PsbI, PsbJ, PsbK, PsbL, PsbM, PsbT, PsbX, PsbY, PsbZ, Psb30/Ycf12, at least 3 peripheral proteins of the oxygen-evolving complex and a large number of cofactors. It forms dimeric complexes.</text>
</comment>
<comment type="subcellular location">
    <subcellularLocation>
        <location evidence="2 4">Plastid</location>
        <location evidence="2 4">Chloroplast thylakoid membrane</location>
        <topology evidence="2 6">Single-pass membrane protein</topology>
    </subcellularLocation>
</comment>
<comment type="PTM">
    <text evidence="2">Phosphorylation is a light-dependent reaction catalyzed by a membrane-bound kinase; phosphorylation occurs on Thr residue(s) in the N-terminus of the protein.</text>
</comment>
<comment type="similarity">
    <text evidence="2">Belongs to the PsbH family.</text>
</comment>